<dbReference type="EMBL" id="CP000572">
    <property type="protein sequence ID" value="ABN90322.1"/>
    <property type="molecule type" value="Genomic_DNA"/>
</dbReference>
<dbReference type="SMR" id="A3NTD7"/>
<dbReference type="KEGG" id="bpl:BURPS1106A_1330"/>
<dbReference type="HOGENOM" id="CLU_061989_0_0_4"/>
<dbReference type="Proteomes" id="UP000006738">
    <property type="component" value="Chromosome I"/>
</dbReference>
<dbReference type="GO" id="GO:0005829">
    <property type="term" value="C:cytosol"/>
    <property type="evidence" value="ECO:0007669"/>
    <property type="project" value="TreeGrafter"/>
</dbReference>
<dbReference type="GO" id="GO:0033194">
    <property type="term" value="P:response to hydroperoxide"/>
    <property type="evidence" value="ECO:0007669"/>
    <property type="project" value="TreeGrafter"/>
</dbReference>
<dbReference type="HAMAP" id="MF_00652">
    <property type="entry name" value="UPF0246"/>
    <property type="match status" value="1"/>
</dbReference>
<dbReference type="InterPro" id="IPR005583">
    <property type="entry name" value="YaaA"/>
</dbReference>
<dbReference type="NCBIfam" id="NF002541">
    <property type="entry name" value="PRK02101.1-1"/>
    <property type="match status" value="1"/>
</dbReference>
<dbReference type="NCBIfam" id="NF002542">
    <property type="entry name" value="PRK02101.1-3"/>
    <property type="match status" value="1"/>
</dbReference>
<dbReference type="PANTHER" id="PTHR30283:SF4">
    <property type="entry name" value="PEROXIDE STRESS RESISTANCE PROTEIN YAAA"/>
    <property type="match status" value="1"/>
</dbReference>
<dbReference type="PANTHER" id="PTHR30283">
    <property type="entry name" value="PEROXIDE STRESS RESPONSE PROTEIN YAAA"/>
    <property type="match status" value="1"/>
</dbReference>
<dbReference type="Pfam" id="PF03883">
    <property type="entry name" value="H2O2_YaaD"/>
    <property type="match status" value="1"/>
</dbReference>
<name>Y1330_BURP0</name>
<accession>A3NTD7</accession>
<sequence length="260" mass="29184">MIIVLSPAKSLDYETPPHVSHHTQPQFADDAAALIDELRRLSPQQIATLMSISDPLARLNFQRYADWSRASTPANAKQAVLAFNGDVYEGLDARSLSPDDLDYAQRHVRVLSGLYGLLRPLDLLQPYRLEMGTRFSNARGKDLYAFWGERITHALNAELKTRVGASRVLVNCASAEYFKSVKPKLLDARVVTPVFEDWKDGRYKIISFHAKRARGLMARYVVEGRIDSPDALKDFASEGYAFDASASNDDTYVFRRRAGA</sequence>
<organism>
    <name type="scientific">Burkholderia pseudomallei (strain 1106a)</name>
    <dbReference type="NCBI Taxonomy" id="357348"/>
    <lineage>
        <taxon>Bacteria</taxon>
        <taxon>Pseudomonadati</taxon>
        <taxon>Pseudomonadota</taxon>
        <taxon>Betaproteobacteria</taxon>
        <taxon>Burkholderiales</taxon>
        <taxon>Burkholderiaceae</taxon>
        <taxon>Burkholderia</taxon>
        <taxon>pseudomallei group</taxon>
    </lineage>
</organism>
<gene>
    <name type="ordered locus">BURPS1106A_1330</name>
</gene>
<evidence type="ECO:0000255" key="1">
    <source>
        <dbReference type="HAMAP-Rule" id="MF_00652"/>
    </source>
</evidence>
<comment type="similarity">
    <text evidence="1">Belongs to the UPF0246 family.</text>
</comment>
<reference key="1">
    <citation type="journal article" date="2010" name="Genome Biol. Evol.">
        <title>Continuing evolution of Burkholderia mallei through genome reduction and large-scale rearrangements.</title>
        <authorList>
            <person name="Losada L."/>
            <person name="Ronning C.M."/>
            <person name="DeShazer D."/>
            <person name="Woods D."/>
            <person name="Fedorova N."/>
            <person name="Kim H.S."/>
            <person name="Shabalina S.A."/>
            <person name="Pearson T.R."/>
            <person name="Brinkac L."/>
            <person name="Tan P."/>
            <person name="Nandi T."/>
            <person name="Crabtree J."/>
            <person name="Badger J."/>
            <person name="Beckstrom-Sternberg S."/>
            <person name="Saqib M."/>
            <person name="Schutzer S.E."/>
            <person name="Keim P."/>
            <person name="Nierman W.C."/>
        </authorList>
    </citation>
    <scope>NUCLEOTIDE SEQUENCE [LARGE SCALE GENOMIC DNA]</scope>
    <source>
        <strain>1106a</strain>
    </source>
</reference>
<proteinExistence type="inferred from homology"/>
<protein>
    <recommendedName>
        <fullName evidence="1">UPF0246 protein BURPS1106A_1330</fullName>
    </recommendedName>
</protein>
<feature type="chain" id="PRO_1000061592" description="UPF0246 protein BURPS1106A_1330">
    <location>
        <begin position="1"/>
        <end position="260"/>
    </location>
</feature>